<protein>
    <recommendedName>
        <fullName>Non-structural protein 4</fullName>
        <shortName>NS4</shortName>
    </recommendedName>
</protein>
<keyword id="KW-1185">Reference proteome</keyword>
<name>VNS4_AQRVC</name>
<dbReference type="EMBL" id="AF403404">
    <property type="protein sequence ID" value="AAM92751.1"/>
    <property type="molecule type" value="Genomic_RNA"/>
</dbReference>
<dbReference type="RefSeq" id="NP_938067.1">
    <property type="nucleotide sequence ID" value="NC_005172.1"/>
</dbReference>
<dbReference type="KEGG" id="vg:2648336"/>
<dbReference type="Proteomes" id="UP000006713">
    <property type="component" value="Genome"/>
</dbReference>
<accession>Q8JU55</accession>
<sequence>MNADRTLSDEQYDWIVAYERHITPHAVLSVRTPAYGRMPPLQIPTFTGPTPTYFVYDGNVEEVSGQLIKDPSDDTLPHHYAATWTCSLFTSRPPSDPAWPRDSVMQYDSNWSPYHRVPMRYFPSFMTLDSDLLGPNDGFWPLLHRCAGFRLRSPWRFPLDVLAAGIGTTVSTIRSLEKAGALNTVEGLLRALGWKYHHLSGLRPQHVEYCMSVWSLSFTRADLDVIDPASWFDGLLRSPIYPDEAPIGLNCEQITTHPFVLLNWIRVQLMDDGC</sequence>
<feature type="chain" id="PRO_0000404180" description="Non-structural protein 4">
    <location>
        <begin position="1"/>
        <end position="274"/>
    </location>
</feature>
<comment type="similarity">
    <text evidence="1">Belongs to the aquareoviridae NS4 protein family.</text>
</comment>
<gene>
    <name type="primary">S7</name>
</gene>
<proteinExistence type="inferred from homology"/>
<organismHost>
    <name type="scientific">Notemigonus crysoleucas</name>
    <name type="common">Golden shiner</name>
    <name type="synonym">Cyprinus crysoleucas</name>
    <dbReference type="NCBI Taxonomy" id="28800"/>
</organismHost>
<organismHost>
    <name type="scientific">Pimephales promelas</name>
    <name type="common">Fathead minnow</name>
    <dbReference type="NCBI Taxonomy" id="90988"/>
</organismHost>
<reference key="1">
    <citation type="journal article" date="2002" name="J. Gen. Virol.">
        <title>Common evolutionary origin of aquareoviruses and orthoreoviruses revealed by genome characterization of Golden shiner reovirus, Grass carp reovirus, Striped bass reovirus and golden ide reovirus (genus Aquareovirus, family Reoviridae).</title>
        <authorList>
            <person name="Attoui H."/>
            <person name="Fang Q."/>
            <person name="Mohd Jaafar F."/>
            <person name="Cantaloube J.F."/>
            <person name="Biagini P."/>
            <person name="de Micco P."/>
            <person name="de Lamballerie X."/>
        </authorList>
    </citation>
    <scope>NUCLEOTIDE SEQUENCE [GENOMIC RNA]</scope>
</reference>
<organism>
    <name type="scientific">Aquareovirus C (isolate Golden shiner/USA/GSRV/1977)</name>
    <name type="common">AQRV-C</name>
    <dbReference type="NCBI Taxonomy" id="185783"/>
    <lineage>
        <taxon>Viruses</taxon>
        <taxon>Riboviria</taxon>
        <taxon>Orthornavirae</taxon>
        <taxon>Duplornaviricota</taxon>
        <taxon>Resentoviricetes</taxon>
        <taxon>Reovirales</taxon>
        <taxon>Spinareoviridae</taxon>
        <taxon>Aquareovirus</taxon>
        <taxon>Aquareovirus ctenopharyngodontis</taxon>
    </lineage>
</organism>
<evidence type="ECO:0000305" key="1"/>